<evidence type="ECO:0000255" key="1">
    <source>
        <dbReference type="HAMAP-Rule" id="MF_00011"/>
    </source>
</evidence>
<gene>
    <name evidence="1" type="primary">purA</name>
    <name type="ordered locus">SeD_A4763</name>
</gene>
<keyword id="KW-0963">Cytoplasm</keyword>
<keyword id="KW-0342">GTP-binding</keyword>
<keyword id="KW-0436">Ligase</keyword>
<keyword id="KW-0460">Magnesium</keyword>
<keyword id="KW-0479">Metal-binding</keyword>
<keyword id="KW-0547">Nucleotide-binding</keyword>
<keyword id="KW-0658">Purine biosynthesis</keyword>
<name>PURA_SALDC</name>
<dbReference type="EC" id="6.3.4.4" evidence="1"/>
<dbReference type="EMBL" id="CP001144">
    <property type="protein sequence ID" value="ACH74293.1"/>
    <property type="molecule type" value="Genomic_DNA"/>
</dbReference>
<dbReference type="RefSeq" id="WP_000527976.1">
    <property type="nucleotide sequence ID" value="NC_011205.1"/>
</dbReference>
<dbReference type="SMR" id="B5FRN3"/>
<dbReference type="KEGG" id="sed:SeD_A4763"/>
<dbReference type="HOGENOM" id="CLU_029848_0_0_6"/>
<dbReference type="UniPathway" id="UPA00075">
    <property type="reaction ID" value="UER00335"/>
</dbReference>
<dbReference type="Proteomes" id="UP000008322">
    <property type="component" value="Chromosome"/>
</dbReference>
<dbReference type="GO" id="GO:0005737">
    <property type="term" value="C:cytoplasm"/>
    <property type="evidence" value="ECO:0007669"/>
    <property type="project" value="UniProtKB-SubCell"/>
</dbReference>
<dbReference type="GO" id="GO:0004019">
    <property type="term" value="F:adenylosuccinate synthase activity"/>
    <property type="evidence" value="ECO:0007669"/>
    <property type="project" value="UniProtKB-UniRule"/>
</dbReference>
<dbReference type="GO" id="GO:0005525">
    <property type="term" value="F:GTP binding"/>
    <property type="evidence" value="ECO:0007669"/>
    <property type="project" value="UniProtKB-UniRule"/>
</dbReference>
<dbReference type="GO" id="GO:0000287">
    <property type="term" value="F:magnesium ion binding"/>
    <property type="evidence" value="ECO:0007669"/>
    <property type="project" value="UniProtKB-UniRule"/>
</dbReference>
<dbReference type="GO" id="GO:0044208">
    <property type="term" value="P:'de novo' AMP biosynthetic process"/>
    <property type="evidence" value="ECO:0007669"/>
    <property type="project" value="UniProtKB-UniRule"/>
</dbReference>
<dbReference type="GO" id="GO:0046040">
    <property type="term" value="P:IMP metabolic process"/>
    <property type="evidence" value="ECO:0007669"/>
    <property type="project" value="TreeGrafter"/>
</dbReference>
<dbReference type="CDD" id="cd03108">
    <property type="entry name" value="AdSS"/>
    <property type="match status" value="1"/>
</dbReference>
<dbReference type="FunFam" id="1.10.300.10:FF:000001">
    <property type="entry name" value="Adenylosuccinate synthetase"/>
    <property type="match status" value="1"/>
</dbReference>
<dbReference type="FunFam" id="3.90.170.10:FF:000001">
    <property type="entry name" value="Adenylosuccinate synthetase"/>
    <property type="match status" value="1"/>
</dbReference>
<dbReference type="Gene3D" id="3.40.440.10">
    <property type="entry name" value="Adenylosuccinate Synthetase, subunit A, domain 1"/>
    <property type="match status" value="1"/>
</dbReference>
<dbReference type="Gene3D" id="1.10.300.10">
    <property type="entry name" value="Adenylosuccinate Synthetase, subunit A, domain 2"/>
    <property type="match status" value="1"/>
</dbReference>
<dbReference type="Gene3D" id="3.90.170.10">
    <property type="entry name" value="Adenylosuccinate Synthetase, subunit A, domain 3"/>
    <property type="match status" value="1"/>
</dbReference>
<dbReference type="HAMAP" id="MF_00011">
    <property type="entry name" value="Adenylosucc_synth"/>
    <property type="match status" value="1"/>
</dbReference>
<dbReference type="InterPro" id="IPR018220">
    <property type="entry name" value="Adenylosuccin_syn_GTP-bd"/>
</dbReference>
<dbReference type="InterPro" id="IPR033128">
    <property type="entry name" value="Adenylosuccin_syn_Lys_AS"/>
</dbReference>
<dbReference type="InterPro" id="IPR042109">
    <property type="entry name" value="Adenylosuccinate_synth_dom1"/>
</dbReference>
<dbReference type="InterPro" id="IPR042110">
    <property type="entry name" value="Adenylosuccinate_synth_dom2"/>
</dbReference>
<dbReference type="InterPro" id="IPR042111">
    <property type="entry name" value="Adenylosuccinate_synth_dom3"/>
</dbReference>
<dbReference type="InterPro" id="IPR001114">
    <property type="entry name" value="Adenylosuccinate_synthetase"/>
</dbReference>
<dbReference type="InterPro" id="IPR027417">
    <property type="entry name" value="P-loop_NTPase"/>
</dbReference>
<dbReference type="NCBIfam" id="NF002223">
    <property type="entry name" value="PRK01117.1"/>
    <property type="match status" value="1"/>
</dbReference>
<dbReference type="NCBIfam" id="TIGR00184">
    <property type="entry name" value="purA"/>
    <property type="match status" value="1"/>
</dbReference>
<dbReference type="PANTHER" id="PTHR11846">
    <property type="entry name" value="ADENYLOSUCCINATE SYNTHETASE"/>
    <property type="match status" value="1"/>
</dbReference>
<dbReference type="PANTHER" id="PTHR11846:SF0">
    <property type="entry name" value="ADENYLOSUCCINATE SYNTHETASE"/>
    <property type="match status" value="1"/>
</dbReference>
<dbReference type="Pfam" id="PF00709">
    <property type="entry name" value="Adenylsucc_synt"/>
    <property type="match status" value="1"/>
</dbReference>
<dbReference type="SMART" id="SM00788">
    <property type="entry name" value="Adenylsucc_synt"/>
    <property type="match status" value="1"/>
</dbReference>
<dbReference type="SUPFAM" id="SSF52540">
    <property type="entry name" value="P-loop containing nucleoside triphosphate hydrolases"/>
    <property type="match status" value="1"/>
</dbReference>
<dbReference type="PROSITE" id="PS01266">
    <property type="entry name" value="ADENYLOSUCCIN_SYN_1"/>
    <property type="match status" value="1"/>
</dbReference>
<dbReference type="PROSITE" id="PS00513">
    <property type="entry name" value="ADENYLOSUCCIN_SYN_2"/>
    <property type="match status" value="1"/>
</dbReference>
<proteinExistence type="inferred from homology"/>
<protein>
    <recommendedName>
        <fullName evidence="1">Adenylosuccinate synthetase</fullName>
        <shortName evidence="1">AMPSase</shortName>
        <shortName evidence="1">AdSS</shortName>
        <ecNumber evidence="1">6.3.4.4</ecNumber>
    </recommendedName>
    <alternativeName>
        <fullName evidence="1">IMP--aspartate ligase</fullName>
    </alternativeName>
</protein>
<organism>
    <name type="scientific">Salmonella dublin (strain CT_02021853)</name>
    <dbReference type="NCBI Taxonomy" id="439851"/>
    <lineage>
        <taxon>Bacteria</taxon>
        <taxon>Pseudomonadati</taxon>
        <taxon>Pseudomonadota</taxon>
        <taxon>Gammaproteobacteria</taxon>
        <taxon>Enterobacterales</taxon>
        <taxon>Enterobacteriaceae</taxon>
        <taxon>Salmonella</taxon>
    </lineage>
</organism>
<accession>B5FRN3</accession>
<feature type="chain" id="PRO_1000089333" description="Adenylosuccinate synthetase">
    <location>
        <begin position="1"/>
        <end position="432"/>
    </location>
</feature>
<feature type="active site" description="Proton acceptor" evidence="1">
    <location>
        <position position="14"/>
    </location>
</feature>
<feature type="active site" description="Proton donor" evidence="1">
    <location>
        <position position="42"/>
    </location>
</feature>
<feature type="binding site" evidence="1">
    <location>
        <begin position="13"/>
        <end position="19"/>
    </location>
    <ligand>
        <name>GTP</name>
        <dbReference type="ChEBI" id="CHEBI:37565"/>
    </ligand>
</feature>
<feature type="binding site" description="in other chain" evidence="1">
    <location>
        <begin position="14"/>
        <end position="17"/>
    </location>
    <ligand>
        <name>IMP</name>
        <dbReference type="ChEBI" id="CHEBI:58053"/>
        <note>ligand shared between dimeric partners</note>
    </ligand>
</feature>
<feature type="binding site" evidence="1">
    <location>
        <position position="14"/>
    </location>
    <ligand>
        <name>Mg(2+)</name>
        <dbReference type="ChEBI" id="CHEBI:18420"/>
    </ligand>
</feature>
<feature type="binding site" description="in other chain" evidence="1">
    <location>
        <begin position="39"/>
        <end position="42"/>
    </location>
    <ligand>
        <name>IMP</name>
        <dbReference type="ChEBI" id="CHEBI:58053"/>
        <note>ligand shared between dimeric partners</note>
    </ligand>
</feature>
<feature type="binding site" evidence="1">
    <location>
        <begin position="41"/>
        <end position="43"/>
    </location>
    <ligand>
        <name>GTP</name>
        <dbReference type="ChEBI" id="CHEBI:37565"/>
    </ligand>
</feature>
<feature type="binding site" evidence="1">
    <location>
        <position position="41"/>
    </location>
    <ligand>
        <name>Mg(2+)</name>
        <dbReference type="ChEBI" id="CHEBI:18420"/>
    </ligand>
</feature>
<feature type="binding site" description="in other chain" evidence="1">
    <location>
        <position position="130"/>
    </location>
    <ligand>
        <name>IMP</name>
        <dbReference type="ChEBI" id="CHEBI:58053"/>
        <note>ligand shared between dimeric partners</note>
    </ligand>
</feature>
<feature type="binding site" evidence="1">
    <location>
        <position position="144"/>
    </location>
    <ligand>
        <name>IMP</name>
        <dbReference type="ChEBI" id="CHEBI:58053"/>
        <note>ligand shared between dimeric partners</note>
    </ligand>
</feature>
<feature type="binding site" description="in other chain" evidence="1">
    <location>
        <position position="225"/>
    </location>
    <ligand>
        <name>IMP</name>
        <dbReference type="ChEBI" id="CHEBI:58053"/>
        <note>ligand shared between dimeric partners</note>
    </ligand>
</feature>
<feature type="binding site" description="in other chain" evidence="1">
    <location>
        <position position="240"/>
    </location>
    <ligand>
        <name>IMP</name>
        <dbReference type="ChEBI" id="CHEBI:58053"/>
        <note>ligand shared between dimeric partners</note>
    </ligand>
</feature>
<feature type="binding site" evidence="1">
    <location>
        <begin position="300"/>
        <end position="306"/>
    </location>
    <ligand>
        <name>substrate</name>
    </ligand>
</feature>
<feature type="binding site" description="in other chain" evidence="1">
    <location>
        <position position="304"/>
    </location>
    <ligand>
        <name>IMP</name>
        <dbReference type="ChEBI" id="CHEBI:58053"/>
        <note>ligand shared between dimeric partners</note>
    </ligand>
</feature>
<feature type="binding site" evidence="1">
    <location>
        <position position="306"/>
    </location>
    <ligand>
        <name>GTP</name>
        <dbReference type="ChEBI" id="CHEBI:37565"/>
    </ligand>
</feature>
<feature type="binding site" evidence="1">
    <location>
        <begin position="332"/>
        <end position="334"/>
    </location>
    <ligand>
        <name>GTP</name>
        <dbReference type="ChEBI" id="CHEBI:37565"/>
    </ligand>
</feature>
<feature type="binding site" evidence="1">
    <location>
        <begin position="415"/>
        <end position="417"/>
    </location>
    <ligand>
        <name>GTP</name>
        <dbReference type="ChEBI" id="CHEBI:37565"/>
    </ligand>
</feature>
<comment type="function">
    <text evidence="1">Plays an important role in the de novo pathway of purine nucleotide biosynthesis. Catalyzes the first committed step in the biosynthesis of AMP from IMP.</text>
</comment>
<comment type="catalytic activity">
    <reaction evidence="1">
        <text>IMP + L-aspartate + GTP = N(6)-(1,2-dicarboxyethyl)-AMP + GDP + phosphate + 2 H(+)</text>
        <dbReference type="Rhea" id="RHEA:15753"/>
        <dbReference type="ChEBI" id="CHEBI:15378"/>
        <dbReference type="ChEBI" id="CHEBI:29991"/>
        <dbReference type="ChEBI" id="CHEBI:37565"/>
        <dbReference type="ChEBI" id="CHEBI:43474"/>
        <dbReference type="ChEBI" id="CHEBI:57567"/>
        <dbReference type="ChEBI" id="CHEBI:58053"/>
        <dbReference type="ChEBI" id="CHEBI:58189"/>
        <dbReference type="EC" id="6.3.4.4"/>
    </reaction>
</comment>
<comment type="cofactor">
    <cofactor evidence="1">
        <name>Mg(2+)</name>
        <dbReference type="ChEBI" id="CHEBI:18420"/>
    </cofactor>
    <text evidence="1">Binds 1 Mg(2+) ion per subunit.</text>
</comment>
<comment type="pathway">
    <text evidence="1">Purine metabolism; AMP biosynthesis via de novo pathway; AMP from IMP: step 1/2.</text>
</comment>
<comment type="subunit">
    <text evidence="1">Homodimer.</text>
</comment>
<comment type="subcellular location">
    <subcellularLocation>
        <location evidence="1">Cytoplasm</location>
    </subcellularLocation>
</comment>
<comment type="similarity">
    <text evidence="1">Belongs to the adenylosuccinate synthetase family.</text>
</comment>
<reference key="1">
    <citation type="journal article" date="2011" name="J. Bacteriol.">
        <title>Comparative genomics of 28 Salmonella enterica isolates: evidence for CRISPR-mediated adaptive sublineage evolution.</title>
        <authorList>
            <person name="Fricke W.F."/>
            <person name="Mammel M.K."/>
            <person name="McDermott P.F."/>
            <person name="Tartera C."/>
            <person name="White D.G."/>
            <person name="Leclerc J.E."/>
            <person name="Ravel J."/>
            <person name="Cebula T.A."/>
        </authorList>
    </citation>
    <scope>NUCLEOTIDE SEQUENCE [LARGE SCALE GENOMIC DNA]</scope>
    <source>
        <strain>CT_02021853</strain>
    </source>
</reference>
<sequence>MGNNVVVLGTQWGDEGKGKIVDLLTERAKYVVRYQGGHNAGHTLVINGEKTVLHLIPSGILRENVTSIIGNGVVLSPSALMKEMKELEDRGIPVRERLLLSEACPLILDYHVALDNAREKARGAKAIGTTGRGIGPAYEDKVARRGLRVGDLFDKETFAEKLKEVMEYHNFQLVNYYKVEAVDYQKVLDDTMAVADILTSMVVDVSDLLDQARQRGDFVMFEGAQGTLLDIDHGTYPYVTSSNTTAGGVATGSGLGPRYVDYVLGILKAYSTRVGAGPFPTELFDETGEFLCKQGNEYGATTGRRRRTGWLDTVAVRRAVQLNSLSGFCLTKLDVLDGLKEVKLCVAYRMPDGREVTTTPLAADDWKGVEPIYETMPGWSESTFGVKDRSGLPQAALNYIKRIEELTGVPIDIISTGPDRTETMILRDPFDA</sequence>